<evidence type="ECO:0000255" key="1">
    <source>
        <dbReference type="HAMAP-Rule" id="MF_00249"/>
    </source>
</evidence>
<name>HSLU_KLEP7</name>
<keyword id="KW-0067">ATP-binding</keyword>
<keyword id="KW-0143">Chaperone</keyword>
<keyword id="KW-0963">Cytoplasm</keyword>
<keyword id="KW-0547">Nucleotide-binding</keyword>
<comment type="function">
    <text evidence="1">ATPase subunit of a proteasome-like degradation complex; this subunit has chaperone activity. The binding of ATP and its subsequent hydrolysis by HslU are essential for unfolding of protein substrates subsequently hydrolyzed by HslV. HslU recognizes the N-terminal part of its protein substrates and unfolds these before they are guided to HslV for hydrolysis.</text>
</comment>
<comment type="subunit">
    <text evidence="1">A double ring-shaped homohexamer of HslV is capped on each side by a ring-shaped HslU homohexamer. The assembly of the HslU/HslV complex is dependent on binding of ATP.</text>
</comment>
<comment type="subcellular location">
    <subcellularLocation>
        <location evidence="1">Cytoplasm</location>
    </subcellularLocation>
</comment>
<comment type="similarity">
    <text evidence="1">Belongs to the ClpX chaperone family. HslU subfamily.</text>
</comment>
<accession>A6TGC1</accession>
<gene>
    <name evidence="1" type="primary">hslU</name>
    <name type="ordered locus">KPN78578_41810</name>
    <name type="ORF">KPN_04226</name>
</gene>
<sequence length="444" mass="49732">MSEMTPREIVSELDKHIIGQDAAKRSVSIALRNRWRRMQLNEELRHEVTPKNILMIGPTGVGKTEIARRLAKLANAPFIKVEATKFTEVGYVGKEVDSIIRDLTDAAIKMVRMQSIDKNRYRAEEMAEERILDVLIPPAKNNWGQAEQPQEPSAARQAFRKKLREGQLDDKEIEIDLAAAPMGVEIMSPPGMEEMTSQLQSMFQNLGGQKQKPRKLKIKDAMKLLIEEEAAKLVNPEELKQEAIDAVEQHGIVFIDEIDKICKRGGNASGPDVSREGVQRDLLPLVEGCTVSTKHGMVKTDHILFIASGAFQVASPSDLIPELQGRLPIRVELKALTTHDFERILTEPNASITVQYKALMATEGVNIEFTEDGIKRIAQAAWQVNETTENIGARRLHTVLERLVEDISYDASEMNGQTVTIDAEYVSKHLDVLVADEDLSRFIL</sequence>
<feature type="chain" id="PRO_1000012752" description="ATP-dependent protease ATPase subunit HslU">
    <location>
        <begin position="1"/>
        <end position="444"/>
    </location>
</feature>
<feature type="binding site" evidence="1">
    <location>
        <position position="18"/>
    </location>
    <ligand>
        <name>ATP</name>
        <dbReference type="ChEBI" id="CHEBI:30616"/>
    </ligand>
</feature>
<feature type="binding site" evidence="1">
    <location>
        <begin position="60"/>
        <end position="65"/>
    </location>
    <ligand>
        <name>ATP</name>
        <dbReference type="ChEBI" id="CHEBI:30616"/>
    </ligand>
</feature>
<feature type="binding site" evidence="1">
    <location>
        <position position="256"/>
    </location>
    <ligand>
        <name>ATP</name>
        <dbReference type="ChEBI" id="CHEBI:30616"/>
    </ligand>
</feature>
<feature type="binding site" evidence="1">
    <location>
        <position position="322"/>
    </location>
    <ligand>
        <name>ATP</name>
        <dbReference type="ChEBI" id="CHEBI:30616"/>
    </ligand>
</feature>
<feature type="binding site" evidence="1">
    <location>
        <position position="394"/>
    </location>
    <ligand>
        <name>ATP</name>
        <dbReference type="ChEBI" id="CHEBI:30616"/>
    </ligand>
</feature>
<dbReference type="EMBL" id="CP000647">
    <property type="protein sequence ID" value="ABR79605.1"/>
    <property type="molecule type" value="Genomic_DNA"/>
</dbReference>
<dbReference type="RefSeq" id="WP_015959208.1">
    <property type="nucleotide sequence ID" value="NC_009648.1"/>
</dbReference>
<dbReference type="SMR" id="A6TGC1"/>
<dbReference type="STRING" id="272620.KPN_04226"/>
<dbReference type="jPOST" id="A6TGC1"/>
<dbReference type="PaxDb" id="272620-KPN_04226"/>
<dbReference type="EnsemblBacteria" id="ABR79605">
    <property type="protein sequence ID" value="ABR79605"/>
    <property type="gene ID" value="KPN_04226"/>
</dbReference>
<dbReference type="KEGG" id="kpn:KPN_04226"/>
<dbReference type="HOGENOM" id="CLU_033123_0_0_6"/>
<dbReference type="Proteomes" id="UP000000265">
    <property type="component" value="Chromosome"/>
</dbReference>
<dbReference type="GO" id="GO:0009376">
    <property type="term" value="C:HslUV protease complex"/>
    <property type="evidence" value="ECO:0007669"/>
    <property type="project" value="UniProtKB-UniRule"/>
</dbReference>
<dbReference type="GO" id="GO:0005524">
    <property type="term" value="F:ATP binding"/>
    <property type="evidence" value="ECO:0007669"/>
    <property type="project" value="UniProtKB-UniRule"/>
</dbReference>
<dbReference type="GO" id="GO:0016887">
    <property type="term" value="F:ATP hydrolysis activity"/>
    <property type="evidence" value="ECO:0007669"/>
    <property type="project" value="InterPro"/>
</dbReference>
<dbReference type="GO" id="GO:0008233">
    <property type="term" value="F:peptidase activity"/>
    <property type="evidence" value="ECO:0007669"/>
    <property type="project" value="InterPro"/>
</dbReference>
<dbReference type="GO" id="GO:0036402">
    <property type="term" value="F:proteasome-activating activity"/>
    <property type="evidence" value="ECO:0007669"/>
    <property type="project" value="UniProtKB-UniRule"/>
</dbReference>
<dbReference type="GO" id="GO:0043335">
    <property type="term" value="P:protein unfolding"/>
    <property type="evidence" value="ECO:0007669"/>
    <property type="project" value="UniProtKB-UniRule"/>
</dbReference>
<dbReference type="GO" id="GO:0051603">
    <property type="term" value="P:proteolysis involved in protein catabolic process"/>
    <property type="evidence" value="ECO:0007669"/>
    <property type="project" value="TreeGrafter"/>
</dbReference>
<dbReference type="CDD" id="cd19498">
    <property type="entry name" value="RecA-like_HslU"/>
    <property type="match status" value="1"/>
</dbReference>
<dbReference type="FunFam" id="1.10.8.10:FF:000028">
    <property type="entry name" value="ATP-dependent protease ATPase subunit HslU"/>
    <property type="match status" value="2"/>
</dbReference>
<dbReference type="FunFam" id="1.10.8.60:FF:000027">
    <property type="entry name" value="ATP-dependent protease ATPase subunit HslU"/>
    <property type="match status" value="1"/>
</dbReference>
<dbReference type="FunFam" id="3.40.50.300:FF:000213">
    <property type="entry name" value="ATP-dependent protease ATPase subunit HslU"/>
    <property type="match status" value="1"/>
</dbReference>
<dbReference type="FunFam" id="3.40.50.300:FF:000220">
    <property type="entry name" value="ATP-dependent protease ATPase subunit HslU"/>
    <property type="match status" value="1"/>
</dbReference>
<dbReference type="Gene3D" id="1.10.8.60">
    <property type="match status" value="1"/>
</dbReference>
<dbReference type="Gene3D" id="1.10.8.10">
    <property type="entry name" value="DNA helicase RuvA subunit, C-terminal domain"/>
    <property type="match status" value="1"/>
</dbReference>
<dbReference type="Gene3D" id="3.40.50.300">
    <property type="entry name" value="P-loop containing nucleotide triphosphate hydrolases"/>
    <property type="match status" value="2"/>
</dbReference>
<dbReference type="HAMAP" id="MF_00249">
    <property type="entry name" value="HslU"/>
    <property type="match status" value="1"/>
</dbReference>
<dbReference type="InterPro" id="IPR003593">
    <property type="entry name" value="AAA+_ATPase"/>
</dbReference>
<dbReference type="InterPro" id="IPR050052">
    <property type="entry name" value="ATP-dep_Clp_protease_ClpX"/>
</dbReference>
<dbReference type="InterPro" id="IPR003959">
    <property type="entry name" value="ATPase_AAA_core"/>
</dbReference>
<dbReference type="InterPro" id="IPR019489">
    <property type="entry name" value="Clp_ATPase_C"/>
</dbReference>
<dbReference type="InterPro" id="IPR004491">
    <property type="entry name" value="HslU"/>
</dbReference>
<dbReference type="InterPro" id="IPR027417">
    <property type="entry name" value="P-loop_NTPase"/>
</dbReference>
<dbReference type="NCBIfam" id="TIGR00390">
    <property type="entry name" value="hslU"/>
    <property type="match status" value="1"/>
</dbReference>
<dbReference type="NCBIfam" id="NF003544">
    <property type="entry name" value="PRK05201.1"/>
    <property type="match status" value="1"/>
</dbReference>
<dbReference type="PANTHER" id="PTHR48102">
    <property type="entry name" value="ATP-DEPENDENT CLP PROTEASE ATP-BINDING SUBUNIT CLPX-LIKE, MITOCHONDRIAL-RELATED"/>
    <property type="match status" value="1"/>
</dbReference>
<dbReference type="PANTHER" id="PTHR48102:SF3">
    <property type="entry name" value="ATP-DEPENDENT PROTEASE ATPASE SUBUNIT HSLU"/>
    <property type="match status" value="1"/>
</dbReference>
<dbReference type="Pfam" id="PF00004">
    <property type="entry name" value="AAA"/>
    <property type="match status" value="1"/>
</dbReference>
<dbReference type="Pfam" id="PF07724">
    <property type="entry name" value="AAA_2"/>
    <property type="match status" value="1"/>
</dbReference>
<dbReference type="SMART" id="SM00382">
    <property type="entry name" value="AAA"/>
    <property type="match status" value="1"/>
</dbReference>
<dbReference type="SMART" id="SM01086">
    <property type="entry name" value="ClpB_D2-small"/>
    <property type="match status" value="1"/>
</dbReference>
<dbReference type="SUPFAM" id="SSF52540">
    <property type="entry name" value="P-loop containing nucleoside triphosphate hydrolases"/>
    <property type="match status" value="1"/>
</dbReference>
<organism>
    <name type="scientific">Klebsiella pneumoniae subsp. pneumoniae (strain ATCC 700721 / MGH 78578)</name>
    <dbReference type="NCBI Taxonomy" id="272620"/>
    <lineage>
        <taxon>Bacteria</taxon>
        <taxon>Pseudomonadati</taxon>
        <taxon>Pseudomonadota</taxon>
        <taxon>Gammaproteobacteria</taxon>
        <taxon>Enterobacterales</taxon>
        <taxon>Enterobacteriaceae</taxon>
        <taxon>Klebsiella/Raoultella group</taxon>
        <taxon>Klebsiella</taxon>
        <taxon>Klebsiella pneumoniae complex</taxon>
    </lineage>
</organism>
<protein>
    <recommendedName>
        <fullName evidence="1">ATP-dependent protease ATPase subunit HslU</fullName>
    </recommendedName>
    <alternativeName>
        <fullName evidence="1">Unfoldase HslU</fullName>
    </alternativeName>
</protein>
<proteinExistence type="inferred from homology"/>
<reference key="1">
    <citation type="submission" date="2006-09" db="EMBL/GenBank/DDBJ databases">
        <authorList>
            <consortium name="The Klebsiella pneumonia Genome Sequencing Project"/>
            <person name="McClelland M."/>
            <person name="Sanderson E.K."/>
            <person name="Spieth J."/>
            <person name="Clifton W.S."/>
            <person name="Latreille P."/>
            <person name="Sabo A."/>
            <person name="Pepin K."/>
            <person name="Bhonagiri V."/>
            <person name="Porwollik S."/>
            <person name="Ali J."/>
            <person name="Wilson R.K."/>
        </authorList>
    </citation>
    <scope>NUCLEOTIDE SEQUENCE [LARGE SCALE GENOMIC DNA]</scope>
    <source>
        <strain>ATCC 700721 / MGH 78578</strain>
    </source>
</reference>